<sequence>DPNATIIMLGTGTGIAPFR</sequence>
<comment type="function">
    <text evidence="1">May play a key role in regulating the relative amounts of cyclic and non-cyclic electron flow to meet the demands of the plant for ATP and reducing power.</text>
</comment>
<comment type="catalytic activity">
    <reaction>
        <text>2 reduced [2Fe-2S]-[ferredoxin] + NADP(+) + H(+) = 2 oxidized [2Fe-2S]-[ferredoxin] + NADPH</text>
        <dbReference type="Rhea" id="RHEA:20125"/>
        <dbReference type="Rhea" id="RHEA-COMP:10000"/>
        <dbReference type="Rhea" id="RHEA-COMP:10001"/>
        <dbReference type="ChEBI" id="CHEBI:15378"/>
        <dbReference type="ChEBI" id="CHEBI:33737"/>
        <dbReference type="ChEBI" id="CHEBI:33738"/>
        <dbReference type="ChEBI" id="CHEBI:57783"/>
        <dbReference type="ChEBI" id="CHEBI:58349"/>
        <dbReference type="EC" id="1.18.1.2"/>
    </reaction>
</comment>
<comment type="cofactor">
    <cofactor evidence="1">
        <name>FAD</name>
        <dbReference type="ChEBI" id="CHEBI:57692"/>
    </cofactor>
</comment>
<comment type="pathway">
    <text evidence="5">Energy metabolism; photosynthesis.</text>
</comment>
<comment type="subcellular location">
    <subcellularLocation>
        <location evidence="1">Plastid</location>
        <location evidence="1">Chloroplast stroma</location>
    </subcellularLocation>
    <subcellularLocation>
        <location evidence="1">Plastid</location>
        <location evidence="1">Chloroplast thylakoid membrane</location>
        <topology evidence="1">Peripheral membrane protein</topology>
        <orientation evidence="1">Stromal side</orientation>
    </subcellularLocation>
    <text evidence="1">In the vicinity of the photosystem I in the non-stacked and fringe portion of the membrane.</text>
</comment>
<comment type="similarity">
    <text evidence="5">Belongs to the ferredoxin--NADP reductase type 1 family.</text>
</comment>
<name>FENR_POPEU</name>
<gene>
    <name evidence="2" type="primary">PETH</name>
</gene>
<feature type="chain" id="PRO_0000304522" description="Ferredoxin--NADP reductase, chloroplastic">
    <location>
        <begin position="1" status="less than"/>
        <end position="19" status="greater than"/>
    </location>
</feature>
<feature type="binding site" evidence="1">
    <location>
        <position position="13"/>
    </location>
    <ligand>
        <name>FAD</name>
        <dbReference type="ChEBI" id="CHEBI:57692"/>
    </ligand>
</feature>
<feature type="binding site" evidence="1">
    <location>
        <position position="13"/>
    </location>
    <ligand>
        <name>NADP(+)</name>
        <dbReference type="ChEBI" id="CHEBI:58349"/>
    </ligand>
</feature>
<feature type="non-terminal residue" evidence="4">
    <location>
        <position position="1"/>
    </location>
</feature>
<feature type="non-terminal residue" evidence="4">
    <location>
        <position position="19"/>
    </location>
</feature>
<keyword id="KW-0150">Chloroplast</keyword>
<keyword id="KW-0903">Direct protein sequencing</keyword>
<keyword id="KW-0249">Electron transport</keyword>
<keyword id="KW-0274">FAD</keyword>
<keyword id="KW-0285">Flavoprotein</keyword>
<keyword id="KW-0472">Membrane</keyword>
<keyword id="KW-0521">NADP</keyword>
<keyword id="KW-0560">Oxidoreductase</keyword>
<keyword id="KW-0602">Photosynthesis</keyword>
<keyword id="KW-0934">Plastid</keyword>
<keyword id="KW-1185">Reference proteome</keyword>
<keyword id="KW-0793">Thylakoid</keyword>
<keyword id="KW-0813">Transport</keyword>
<protein>
    <recommendedName>
        <fullName>Ferredoxin--NADP reductase, chloroplastic</fullName>
        <shortName>FNR</shortName>
        <ecNumber>1.18.1.2</ecNumber>
    </recommendedName>
</protein>
<proteinExistence type="evidence at protein level"/>
<reference evidence="5" key="1">
    <citation type="thesis" date="2006" institute="ICAT-FCUL" country="Portugal">
        <title>Molecular analysis of Populus euphratica Oliv. response to moderate heat stress.</title>
        <authorList>
            <person name="Ferreira S."/>
        </authorList>
    </citation>
    <scope>PROTEIN SEQUENCE</scope>
    <source>
        <tissue evidence="3">Leaf</tissue>
    </source>
</reference>
<organism>
    <name type="scientific">Populus euphratica</name>
    <name type="common">Euphrates poplar</name>
    <dbReference type="NCBI Taxonomy" id="75702"/>
    <lineage>
        <taxon>Eukaryota</taxon>
        <taxon>Viridiplantae</taxon>
        <taxon>Streptophyta</taxon>
        <taxon>Embryophyta</taxon>
        <taxon>Tracheophyta</taxon>
        <taxon>Spermatophyta</taxon>
        <taxon>Magnoliopsida</taxon>
        <taxon>eudicotyledons</taxon>
        <taxon>Gunneridae</taxon>
        <taxon>Pentapetalae</taxon>
        <taxon>rosids</taxon>
        <taxon>fabids</taxon>
        <taxon>Malpighiales</taxon>
        <taxon>Salicaceae</taxon>
        <taxon>Saliceae</taxon>
        <taxon>Populus</taxon>
    </lineage>
</organism>
<accession>P84981</accession>
<dbReference type="EC" id="1.18.1.2"/>
<dbReference type="UniPathway" id="UPA00091"/>
<dbReference type="Proteomes" id="UP000694918">
    <property type="component" value="Unplaced"/>
</dbReference>
<dbReference type="GO" id="GO:0009570">
    <property type="term" value="C:chloroplast stroma"/>
    <property type="evidence" value="ECO:0007669"/>
    <property type="project" value="UniProtKB-SubCell"/>
</dbReference>
<dbReference type="GO" id="GO:0009535">
    <property type="term" value="C:chloroplast thylakoid membrane"/>
    <property type="evidence" value="ECO:0007669"/>
    <property type="project" value="UniProtKB-SubCell"/>
</dbReference>
<dbReference type="GO" id="GO:0004324">
    <property type="term" value="F:ferredoxin-NADP+ reductase activity"/>
    <property type="evidence" value="ECO:0007669"/>
    <property type="project" value="UniProtKB-EC"/>
</dbReference>
<dbReference type="GO" id="GO:0015979">
    <property type="term" value="P:photosynthesis"/>
    <property type="evidence" value="ECO:0007669"/>
    <property type="project" value="UniProtKB-UniPathway"/>
</dbReference>
<dbReference type="Gene3D" id="3.40.50.80">
    <property type="entry name" value="Nucleotide-binding domain of ferredoxin-NADP reductase (FNR) module"/>
    <property type="match status" value="1"/>
</dbReference>
<dbReference type="InterPro" id="IPR039261">
    <property type="entry name" value="FNR_nucleotide-bd"/>
</dbReference>
<dbReference type="SUPFAM" id="SSF52343">
    <property type="entry name" value="Ferredoxin reductase-like, C-terminal NADP-linked domain"/>
    <property type="match status" value="1"/>
</dbReference>
<evidence type="ECO:0000250" key="1"/>
<evidence type="ECO:0000250" key="2">
    <source>
        <dbReference type="UniProtKB" id="P00455"/>
    </source>
</evidence>
<evidence type="ECO:0000269" key="3">
    <source ref="1"/>
</evidence>
<evidence type="ECO:0000303" key="4">
    <source ref="1"/>
</evidence>
<evidence type="ECO:0000305" key="5"/>